<sequence>MVHPVQVGKRTRMSFSRLKEVGQMPNLIEVQLDSYDWFLKEGLQEVFDDINPIQDYTGNLNLEFVGYKLDLDSIKYSVEECKERDSTYAAPLKVKVRLLNKETGEIKEQEVFMGDFPLMTEQGTFIINGAERVIVSQLVRSPGVYYDMTVDKTGSKLFSATVIPNRGAWLEYETDSNNIIYVRIDKTRKLPITILARALGYGTDAEIIEFFGEDERLKATIEKDNTKTREEALLEIYKRLRPGEPPTVDSAESLIESLFFDAKRYDLSRVGRYKFNKKLAIHLRITNQIADQDIVNPQTGEILVQKGEKIDKDKAIEIQNCGINEVYIKIDDKSFKVIGNHFVDIHSLVPFDISDLNIKEYVFYPVLKEILDNYADEESIKEEIRKNIYRLIPKHIIREDIYATINYELALSYDIGYKDDIDHLGNRRLRSVGELLQNQFRIGLSRMERVVKERMTIQDQEVITPQALINIRPVAASIKEFFGSSQLSQFMDQTNPLSELTHKRRLSALGPGGLSRERAGFEVRDVHHSHYGRMCPIETPEGPNIGLINSLATFAKVNEYGFIETPYRRIDPKNKRATNDIVYMTADEEDLYVIARSDEPIDENGYFIDDKVTVRAKEEVLVVPVSEVEYMDISPRQLVSVATAMIPFLENDDASRALMGSNMQRQAVPLLKPQAPIVGTGIEYKAATDSGVLPKAKNAGTVVYVSADEIRVRRDSDGGIDKYKLLKFKRSNQGTCINQRPIVSKGEVVAKETLLADGPSTDLGEIALGKNILMGFITWEGYNYEDAMLISEQLVKEDVFTSIHIEEYEAEARDTKLGPEEITRDIPNVGEEALKDIDERGIIRIGAEVRSGDILVGKVTPKGETELTAEERLLRAIFGEKAREVRDTSLRVPHGEAGIIVDVKIFTRENGDELPPGVNKLVRCYIAQKRKISVGDKMAGRHGNKGVISRVLPEEDMPFLPDGRPLQICLNPLGVPSRMNIGQVLEVHLGLAASKLGWHIATPVFDGAIESDIVDCLRKAGYSEDGKTVLYDGRTGEPFDNRVTVGYMYILKLAHLVDDKIHARSTGPYSLVTQQPLGGKAQFGGQRFGEMEVWALEAYGAAHTLQEILTVKSDDVVGRVKTYEAIVKGENIPEPGVPESFKVLIKELQALCLDVKVLNDDNQEIKLKESVDEDADELEVNIEGTENQPEEKEEKEKEDSDEYDDLREEDVEPDLEELSLDDLDLDDFGDEH</sequence>
<reference key="1">
    <citation type="journal article" date="2007" name="Genome Res.">
        <title>Genome sequence of a proteolytic (Group I) Clostridium botulinum strain Hall A and comparative analysis of the clostridial genomes.</title>
        <authorList>
            <person name="Sebaihia M."/>
            <person name="Peck M.W."/>
            <person name="Minton N.P."/>
            <person name="Thomson N.R."/>
            <person name="Holden M.T.G."/>
            <person name="Mitchell W.J."/>
            <person name="Carter A.T."/>
            <person name="Bentley S.D."/>
            <person name="Mason D.R."/>
            <person name="Crossman L."/>
            <person name="Paul C.J."/>
            <person name="Ivens A."/>
            <person name="Wells-Bennik M.H.J."/>
            <person name="Davis I.J."/>
            <person name="Cerdeno-Tarraga A.M."/>
            <person name="Churcher C."/>
            <person name="Quail M.A."/>
            <person name="Chillingworth T."/>
            <person name="Feltwell T."/>
            <person name="Fraser A."/>
            <person name="Goodhead I."/>
            <person name="Hance Z."/>
            <person name="Jagels K."/>
            <person name="Larke N."/>
            <person name="Maddison M."/>
            <person name="Moule S."/>
            <person name="Mungall K."/>
            <person name="Norbertczak H."/>
            <person name="Rabbinowitsch E."/>
            <person name="Sanders M."/>
            <person name="Simmonds M."/>
            <person name="White B."/>
            <person name="Whithead S."/>
            <person name="Parkhill J."/>
        </authorList>
    </citation>
    <scope>NUCLEOTIDE SEQUENCE [LARGE SCALE GENOMIC DNA]</scope>
    <source>
        <strain>Hall / ATCC 3502 / NCTC 13319 / Type A</strain>
    </source>
</reference>
<reference key="2">
    <citation type="journal article" date="2007" name="PLoS ONE">
        <title>Analysis of the neurotoxin complex genes in Clostridium botulinum A1-A4 and B1 strains: BoNT/A3, /Ba4 and /B1 clusters are located within plasmids.</title>
        <authorList>
            <person name="Smith T.J."/>
            <person name="Hill K.K."/>
            <person name="Foley B.T."/>
            <person name="Detter J.C."/>
            <person name="Munk A.C."/>
            <person name="Bruce D.C."/>
            <person name="Doggett N.A."/>
            <person name="Smith L.A."/>
            <person name="Marks J.D."/>
            <person name="Xie G."/>
            <person name="Brettin T.S."/>
        </authorList>
    </citation>
    <scope>NUCLEOTIDE SEQUENCE [LARGE SCALE GENOMIC DNA]</scope>
    <source>
        <strain>Hall / ATCC 3502 / NCTC 13319 / Type A</strain>
    </source>
</reference>
<evidence type="ECO:0000255" key="1">
    <source>
        <dbReference type="HAMAP-Rule" id="MF_01321"/>
    </source>
</evidence>
<evidence type="ECO:0000256" key="2">
    <source>
        <dbReference type="SAM" id="MobiDB-lite"/>
    </source>
</evidence>
<evidence type="ECO:0000305" key="3"/>
<name>RPOB_CLOBH</name>
<proteinExistence type="inferred from homology"/>
<dbReference type="EC" id="2.7.7.6" evidence="1"/>
<dbReference type="EMBL" id="AM412317">
    <property type="protein sequence ID" value="CAL85049.1"/>
    <property type="molecule type" value="Genomic_DNA"/>
</dbReference>
<dbReference type="EMBL" id="CP000727">
    <property type="protein sequence ID" value="ABS36887.1"/>
    <property type="molecule type" value="Genomic_DNA"/>
</dbReference>
<dbReference type="RefSeq" id="WP_012099583.1">
    <property type="nucleotide sequence ID" value="NC_009698.1"/>
</dbReference>
<dbReference type="RefSeq" id="YP_001255970.1">
    <property type="nucleotide sequence ID" value="NC_009495.1"/>
</dbReference>
<dbReference type="RefSeq" id="YP_001389211.1">
    <property type="nucleotide sequence ID" value="NC_009698.1"/>
</dbReference>
<dbReference type="SMR" id="A5I7L4"/>
<dbReference type="GeneID" id="5187754"/>
<dbReference type="KEGG" id="cbh:CLC_3433"/>
<dbReference type="KEGG" id="cbo:CBO3488"/>
<dbReference type="PATRIC" id="fig|413999.7.peg.3465"/>
<dbReference type="HOGENOM" id="CLU_000524_4_1_9"/>
<dbReference type="PRO" id="PR:A5I7L4"/>
<dbReference type="Proteomes" id="UP000001986">
    <property type="component" value="Chromosome"/>
</dbReference>
<dbReference type="GO" id="GO:0000428">
    <property type="term" value="C:DNA-directed RNA polymerase complex"/>
    <property type="evidence" value="ECO:0007669"/>
    <property type="project" value="UniProtKB-KW"/>
</dbReference>
<dbReference type="GO" id="GO:0003677">
    <property type="term" value="F:DNA binding"/>
    <property type="evidence" value="ECO:0007669"/>
    <property type="project" value="UniProtKB-UniRule"/>
</dbReference>
<dbReference type="GO" id="GO:0003899">
    <property type="term" value="F:DNA-directed RNA polymerase activity"/>
    <property type="evidence" value="ECO:0007669"/>
    <property type="project" value="UniProtKB-UniRule"/>
</dbReference>
<dbReference type="GO" id="GO:0032549">
    <property type="term" value="F:ribonucleoside binding"/>
    <property type="evidence" value="ECO:0007669"/>
    <property type="project" value="InterPro"/>
</dbReference>
<dbReference type="GO" id="GO:0006351">
    <property type="term" value="P:DNA-templated transcription"/>
    <property type="evidence" value="ECO:0007669"/>
    <property type="project" value="UniProtKB-UniRule"/>
</dbReference>
<dbReference type="CDD" id="cd00653">
    <property type="entry name" value="RNA_pol_B_RPB2"/>
    <property type="match status" value="1"/>
</dbReference>
<dbReference type="FunFam" id="3.90.1800.10:FF:000001">
    <property type="entry name" value="DNA-directed RNA polymerase subunit beta"/>
    <property type="match status" value="1"/>
</dbReference>
<dbReference type="Gene3D" id="2.40.50.100">
    <property type="match status" value="1"/>
</dbReference>
<dbReference type="Gene3D" id="2.40.50.150">
    <property type="match status" value="1"/>
</dbReference>
<dbReference type="Gene3D" id="3.90.1100.10">
    <property type="match status" value="1"/>
</dbReference>
<dbReference type="Gene3D" id="2.30.150.10">
    <property type="entry name" value="DNA-directed RNA polymerase, beta subunit, external 1 domain"/>
    <property type="match status" value="1"/>
</dbReference>
<dbReference type="Gene3D" id="2.40.270.10">
    <property type="entry name" value="DNA-directed RNA polymerase, subunit 2, domain 6"/>
    <property type="match status" value="1"/>
</dbReference>
<dbReference type="Gene3D" id="3.90.1800.10">
    <property type="entry name" value="RNA polymerase alpha subunit dimerisation domain"/>
    <property type="match status" value="1"/>
</dbReference>
<dbReference type="Gene3D" id="3.90.1110.10">
    <property type="entry name" value="RNA polymerase Rpb2, domain 2"/>
    <property type="match status" value="1"/>
</dbReference>
<dbReference type="HAMAP" id="MF_01321">
    <property type="entry name" value="RNApol_bact_RpoB"/>
    <property type="match status" value="1"/>
</dbReference>
<dbReference type="InterPro" id="IPR042107">
    <property type="entry name" value="DNA-dir_RNA_pol_bsu_ext_1_sf"/>
</dbReference>
<dbReference type="InterPro" id="IPR019462">
    <property type="entry name" value="DNA-dir_RNA_pol_bsu_external_1"/>
</dbReference>
<dbReference type="InterPro" id="IPR015712">
    <property type="entry name" value="DNA-dir_RNA_pol_su2"/>
</dbReference>
<dbReference type="InterPro" id="IPR007120">
    <property type="entry name" value="DNA-dir_RNAP_su2_dom"/>
</dbReference>
<dbReference type="InterPro" id="IPR037033">
    <property type="entry name" value="DNA-dir_RNAP_su2_hyb_sf"/>
</dbReference>
<dbReference type="InterPro" id="IPR010243">
    <property type="entry name" value="RNA_pol_bsu_bac"/>
</dbReference>
<dbReference type="InterPro" id="IPR007121">
    <property type="entry name" value="RNA_pol_bsu_CS"/>
</dbReference>
<dbReference type="InterPro" id="IPR007644">
    <property type="entry name" value="RNA_pol_bsu_protrusion"/>
</dbReference>
<dbReference type="InterPro" id="IPR007642">
    <property type="entry name" value="RNA_pol_Rpb2_2"/>
</dbReference>
<dbReference type="InterPro" id="IPR037034">
    <property type="entry name" value="RNA_pol_Rpb2_2_sf"/>
</dbReference>
<dbReference type="InterPro" id="IPR007645">
    <property type="entry name" value="RNA_pol_Rpb2_3"/>
</dbReference>
<dbReference type="InterPro" id="IPR007641">
    <property type="entry name" value="RNA_pol_Rpb2_7"/>
</dbReference>
<dbReference type="InterPro" id="IPR014724">
    <property type="entry name" value="RNA_pol_RPB2_OB-fold"/>
</dbReference>
<dbReference type="NCBIfam" id="NF001616">
    <property type="entry name" value="PRK00405.1"/>
    <property type="match status" value="1"/>
</dbReference>
<dbReference type="NCBIfam" id="TIGR02013">
    <property type="entry name" value="rpoB"/>
    <property type="match status" value="1"/>
</dbReference>
<dbReference type="PANTHER" id="PTHR20856">
    <property type="entry name" value="DNA-DIRECTED RNA POLYMERASE I SUBUNIT 2"/>
    <property type="match status" value="1"/>
</dbReference>
<dbReference type="Pfam" id="PF04563">
    <property type="entry name" value="RNA_pol_Rpb2_1"/>
    <property type="match status" value="1"/>
</dbReference>
<dbReference type="Pfam" id="PF04561">
    <property type="entry name" value="RNA_pol_Rpb2_2"/>
    <property type="match status" value="2"/>
</dbReference>
<dbReference type="Pfam" id="PF04565">
    <property type="entry name" value="RNA_pol_Rpb2_3"/>
    <property type="match status" value="1"/>
</dbReference>
<dbReference type="Pfam" id="PF10385">
    <property type="entry name" value="RNA_pol_Rpb2_45"/>
    <property type="match status" value="1"/>
</dbReference>
<dbReference type="Pfam" id="PF00562">
    <property type="entry name" value="RNA_pol_Rpb2_6"/>
    <property type="match status" value="1"/>
</dbReference>
<dbReference type="Pfam" id="PF04560">
    <property type="entry name" value="RNA_pol_Rpb2_7"/>
    <property type="match status" value="1"/>
</dbReference>
<dbReference type="SUPFAM" id="SSF64484">
    <property type="entry name" value="beta and beta-prime subunits of DNA dependent RNA-polymerase"/>
    <property type="match status" value="1"/>
</dbReference>
<dbReference type="PROSITE" id="PS01166">
    <property type="entry name" value="RNA_POL_BETA"/>
    <property type="match status" value="1"/>
</dbReference>
<accession>A5I7L4</accession>
<accession>A7G8U6</accession>
<gene>
    <name evidence="1" type="primary">rpoB</name>
    <name type="ordered locus">CBO3488</name>
    <name type="ordered locus">CLC_3433</name>
</gene>
<feature type="chain" id="PRO_0000329171" description="DNA-directed RNA polymerase subunit beta">
    <location>
        <begin position="1"/>
        <end position="1232"/>
    </location>
</feature>
<feature type="region of interest" description="Disordered" evidence="2">
    <location>
        <begin position="1170"/>
        <end position="1232"/>
    </location>
</feature>
<feature type="compositionally biased region" description="Acidic residues" evidence="2">
    <location>
        <begin position="1171"/>
        <end position="1180"/>
    </location>
</feature>
<feature type="compositionally biased region" description="Basic and acidic residues" evidence="2">
    <location>
        <begin position="1189"/>
        <end position="1198"/>
    </location>
</feature>
<feature type="compositionally biased region" description="Acidic residues" evidence="2">
    <location>
        <begin position="1199"/>
        <end position="1232"/>
    </location>
</feature>
<feature type="sequence conflict" description="In Ref. 2; ABS36887." evidence="3" ref="2">
    <original>A</original>
    <variation>T</variation>
    <location>
        <position position="160"/>
    </location>
</feature>
<keyword id="KW-0240">DNA-directed RNA polymerase</keyword>
<keyword id="KW-0548">Nucleotidyltransferase</keyword>
<keyword id="KW-1185">Reference proteome</keyword>
<keyword id="KW-0804">Transcription</keyword>
<keyword id="KW-0808">Transferase</keyword>
<organism>
    <name type="scientific">Clostridium botulinum (strain Hall / ATCC 3502 / NCTC 13319 / Type A)</name>
    <dbReference type="NCBI Taxonomy" id="441771"/>
    <lineage>
        <taxon>Bacteria</taxon>
        <taxon>Bacillati</taxon>
        <taxon>Bacillota</taxon>
        <taxon>Clostridia</taxon>
        <taxon>Eubacteriales</taxon>
        <taxon>Clostridiaceae</taxon>
        <taxon>Clostridium</taxon>
    </lineage>
</organism>
<protein>
    <recommendedName>
        <fullName evidence="1">DNA-directed RNA polymerase subunit beta</fullName>
        <shortName evidence="1">RNAP subunit beta</shortName>
        <ecNumber evidence="1">2.7.7.6</ecNumber>
    </recommendedName>
    <alternativeName>
        <fullName evidence="1">RNA polymerase subunit beta</fullName>
    </alternativeName>
    <alternativeName>
        <fullName evidence="1">Transcriptase subunit beta</fullName>
    </alternativeName>
</protein>
<comment type="function">
    <text evidence="1">DNA-dependent RNA polymerase catalyzes the transcription of DNA into RNA using the four ribonucleoside triphosphates as substrates.</text>
</comment>
<comment type="catalytic activity">
    <reaction evidence="1">
        <text>RNA(n) + a ribonucleoside 5'-triphosphate = RNA(n+1) + diphosphate</text>
        <dbReference type="Rhea" id="RHEA:21248"/>
        <dbReference type="Rhea" id="RHEA-COMP:14527"/>
        <dbReference type="Rhea" id="RHEA-COMP:17342"/>
        <dbReference type="ChEBI" id="CHEBI:33019"/>
        <dbReference type="ChEBI" id="CHEBI:61557"/>
        <dbReference type="ChEBI" id="CHEBI:140395"/>
        <dbReference type="EC" id="2.7.7.6"/>
    </reaction>
</comment>
<comment type="subunit">
    <text evidence="1">The RNAP catalytic core consists of 2 alpha, 1 beta, 1 beta' and 1 omega subunit. When a sigma factor is associated with the core the holoenzyme is formed, which can initiate transcription.</text>
</comment>
<comment type="similarity">
    <text evidence="1">Belongs to the RNA polymerase beta chain family.</text>
</comment>